<reference key="1">
    <citation type="journal article" date="2006" name="BMC Genomics">
        <title>Complete genome sequence of Shigella flexneri 5b and comparison with Shigella flexneri 2a.</title>
        <authorList>
            <person name="Nie H."/>
            <person name="Yang F."/>
            <person name="Zhang X."/>
            <person name="Yang J."/>
            <person name="Chen L."/>
            <person name="Wang J."/>
            <person name="Xiong Z."/>
            <person name="Peng J."/>
            <person name="Sun L."/>
            <person name="Dong J."/>
            <person name="Xue Y."/>
            <person name="Xu X."/>
            <person name="Chen S."/>
            <person name="Yao Z."/>
            <person name="Shen Y."/>
            <person name="Jin Q."/>
        </authorList>
    </citation>
    <scope>NUCLEOTIDE SEQUENCE [LARGE SCALE GENOMIC DNA]</scope>
    <source>
        <strain>8401</strain>
    </source>
</reference>
<keyword id="KW-0418">Kinase</keyword>
<keyword id="KW-0547">Nucleotide-binding</keyword>
<keyword id="KW-0723">Serine/threonine-protein kinase</keyword>
<keyword id="KW-0808">Transferase</keyword>
<comment type="function">
    <text evidence="1">Bifunctional serine/threonine kinase and phosphorylase involved in the regulation of the phosphoenolpyruvate synthase (PEPS) by catalyzing its phosphorylation/dephosphorylation.</text>
</comment>
<comment type="catalytic activity">
    <reaction evidence="1">
        <text>[pyruvate, water dikinase] + ADP = [pyruvate, water dikinase]-phosphate + AMP + H(+)</text>
        <dbReference type="Rhea" id="RHEA:46020"/>
        <dbReference type="Rhea" id="RHEA-COMP:11425"/>
        <dbReference type="Rhea" id="RHEA-COMP:11426"/>
        <dbReference type="ChEBI" id="CHEBI:15378"/>
        <dbReference type="ChEBI" id="CHEBI:43176"/>
        <dbReference type="ChEBI" id="CHEBI:68546"/>
        <dbReference type="ChEBI" id="CHEBI:456215"/>
        <dbReference type="ChEBI" id="CHEBI:456216"/>
        <dbReference type="EC" id="2.7.11.33"/>
    </reaction>
</comment>
<comment type="catalytic activity">
    <reaction evidence="1">
        <text>[pyruvate, water dikinase]-phosphate + phosphate + H(+) = [pyruvate, water dikinase] + diphosphate</text>
        <dbReference type="Rhea" id="RHEA:48580"/>
        <dbReference type="Rhea" id="RHEA-COMP:11425"/>
        <dbReference type="Rhea" id="RHEA-COMP:11426"/>
        <dbReference type="ChEBI" id="CHEBI:15378"/>
        <dbReference type="ChEBI" id="CHEBI:33019"/>
        <dbReference type="ChEBI" id="CHEBI:43176"/>
        <dbReference type="ChEBI" id="CHEBI:43474"/>
        <dbReference type="ChEBI" id="CHEBI:68546"/>
        <dbReference type="EC" id="2.7.4.28"/>
    </reaction>
</comment>
<comment type="similarity">
    <text evidence="1">Belongs to the pyruvate, phosphate/water dikinase regulatory protein family. PSRP subfamily.</text>
</comment>
<sequence length="277" mass="31211">MDNAVDRHVFYISDGTAITAEVLGHAVMSQFPVTISSITLPFVENESRARAVKDQIDAIYHQTGVRPLVFYSIVLPEIRAIILQSEGFCQDIVQALVAPLQQEMKLDPTPIAHRTHGLNPNNLNKYDARIAAIDYTLAHDDGISLRNLDQAQVILLGVSRCGKTPTSLYLAMQFGIRAANYPFIADDMDNLVLPASLKPLQHKLFGLTIDPERLAAIREERRENSRYASLRQCRMEVAEVEALYRKNQIPWINSTNYSVEEIATKILDIMGLSRRMY</sequence>
<protein>
    <recommendedName>
        <fullName evidence="1">Phosphoenolpyruvate synthase regulatory protein</fullName>
        <shortName evidence="1">PEP synthase regulatory protein</shortName>
        <shortName evidence="1">PSRP</shortName>
        <ecNumber evidence="1">2.7.11.33</ecNumber>
        <ecNumber evidence="1">2.7.4.28</ecNumber>
    </recommendedName>
    <alternativeName>
        <fullName evidence="1">Pyruvate, water dikinase regulatory protein</fullName>
    </alternativeName>
</protein>
<accession>Q0T4R2</accession>
<name>PSRP_SHIF8</name>
<dbReference type="EC" id="2.7.11.33" evidence="1"/>
<dbReference type="EC" id="2.7.4.28" evidence="1"/>
<dbReference type="EMBL" id="CP000266">
    <property type="protein sequence ID" value="ABF03703.1"/>
    <property type="molecule type" value="Genomic_DNA"/>
</dbReference>
<dbReference type="RefSeq" id="WP_000368046.1">
    <property type="nucleotide sequence ID" value="NC_008258.1"/>
</dbReference>
<dbReference type="SMR" id="Q0T4R2"/>
<dbReference type="GeneID" id="93775866"/>
<dbReference type="KEGG" id="sfv:SFV_1521"/>
<dbReference type="HOGENOM" id="CLU_046206_1_0_6"/>
<dbReference type="Proteomes" id="UP000000659">
    <property type="component" value="Chromosome"/>
</dbReference>
<dbReference type="GO" id="GO:0043531">
    <property type="term" value="F:ADP binding"/>
    <property type="evidence" value="ECO:0007669"/>
    <property type="project" value="UniProtKB-UniRule"/>
</dbReference>
<dbReference type="GO" id="GO:0005524">
    <property type="term" value="F:ATP binding"/>
    <property type="evidence" value="ECO:0007669"/>
    <property type="project" value="InterPro"/>
</dbReference>
<dbReference type="GO" id="GO:0016776">
    <property type="term" value="F:phosphotransferase activity, phosphate group as acceptor"/>
    <property type="evidence" value="ECO:0007669"/>
    <property type="project" value="UniProtKB-UniRule"/>
</dbReference>
<dbReference type="GO" id="GO:0004674">
    <property type="term" value="F:protein serine/threonine kinase activity"/>
    <property type="evidence" value="ECO:0007669"/>
    <property type="project" value="UniProtKB-UniRule"/>
</dbReference>
<dbReference type="HAMAP" id="MF_01062">
    <property type="entry name" value="PSRP"/>
    <property type="match status" value="1"/>
</dbReference>
<dbReference type="InterPro" id="IPR005177">
    <property type="entry name" value="Kinase-pyrophosphorylase"/>
</dbReference>
<dbReference type="InterPro" id="IPR026530">
    <property type="entry name" value="PSRP"/>
</dbReference>
<dbReference type="NCBIfam" id="NF003742">
    <property type="entry name" value="PRK05339.1"/>
    <property type="match status" value="1"/>
</dbReference>
<dbReference type="PANTHER" id="PTHR31756">
    <property type="entry name" value="PYRUVATE, PHOSPHATE DIKINASE REGULATORY PROTEIN 1, CHLOROPLASTIC"/>
    <property type="match status" value="1"/>
</dbReference>
<dbReference type="PANTHER" id="PTHR31756:SF3">
    <property type="entry name" value="PYRUVATE, PHOSPHATE DIKINASE REGULATORY PROTEIN 1, CHLOROPLASTIC"/>
    <property type="match status" value="1"/>
</dbReference>
<dbReference type="Pfam" id="PF03618">
    <property type="entry name" value="Kinase-PPPase"/>
    <property type="match status" value="1"/>
</dbReference>
<gene>
    <name evidence="1" type="primary">ppsR</name>
    <name type="ordered locus">SFV_1521</name>
</gene>
<evidence type="ECO:0000255" key="1">
    <source>
        <dbReference type="HAMAP-Rule" id="MF_01062"/>
    </source>
</evidence>
<proteinExistence type="inferred from homology"/>
<feature type="chain" id="PRO_0000316742" description="Phosphoenolpyruvate synthase regulatory protein">
    <location>
        <begin position="1"/>
        <end position="277"/>
    </location>
</feature>
<feature type="binding site" evidence="1">
    <location>
        <begin position="157"/>
        <end position="164"/>
    </location>
    <ligand>
        <name>ADP</name>
        <dbReference type="ChEBI" id="CHEBI:456216"/>
    </ligand>
</feature>
<organism>
    <name type="scientific">Shigella flexneri serotype 5b (strain 8401)</name>
    <dbReference type="NCBI Taxonomy" id="373384"/>
    <lineage>
        <taxon>Bacteria</taxon>
        <taxon>Pseudomonadati</taxon>
        <taxon>Pseudomonadota</taxon>
        <taxon>Gammaproteobacteria</taxon>
        <taxon>Enterobacterales</taxon>
        <taxon>Enterobacteriaceae</taxon>
        <taxon>Shigella</taxon>
    </lineage>
</organism>